<name>RPPH_TOLAT</name>
<comment type="function">
    <text evidence="1">Accelerates the degradation of transcripts by removing pyrophosphate from the 5'-end of triphosphorylated RNA, leading to a more labile monophosphorylated state that can stimulate subsequent ribonuclease cleavage.</text>
</comment>
<comment type="cofactor">
    <cofactor evidence="1">
        <name>a divalent metal cation</name>
        <dbReference type="ChEBI" id="CHEBI:60240"/>
    </cofactor>
</comment>
<comment type="similarity">
    <text evidence="1">Belongs to the Nudix hydrolase family. RppH subfamily.</text>
</comment>
<dbReference type="EC" id="3.6.1.-" evidence="1"/>
<dbReference type="EMBL" id="CP001616">
    <property type="protein sequence ID" value="ACQ94552.1"/>
    <property type="molecule type" value="Genomic_DNA"/>
</dbReference>
<dbReference type="RefSeq" id="WP_015880001.1">
    <property type="nucleotide sequence ID" value="NC_012691.1"/>
</dbReference>
<dbReference type="SMR" id="C4LD21"/>
<dbReference type="STRING" id="595494.Tola_2963"/>
<dbReference type="KEGG" id="tau:Tola_2963"/>
<dbReference type="eggNOG" id="COG0494">
    <property type="taxonomic scope" value="Bacteria"/>
</dbReference>
<dbReference type="HOGENOM" id="CLU_087195_3_2_6"/>
<dbReference type="OrthoDB" id="9816040at2"/>
<dbReference type="Proteomes" id="UP000009073">
    <property type="component" value="Chromosome"/>
</dbReference>
<dbReference type="GO" id="GO:0005737">
    <property type="term" value="C:cytoplasm"/>
    <property type="evidence" value="ECO:0007669"/>
    <property type="project" value="TreeGrafter"/>
</dbReference>
<dbReference type="GO" id="GO:0046872">
    <property type="term" value="F:metal ion binding"/>
    <property type="evidence" value="ECO:0007669"/>
    <property type="project" value="UniProtKB-KW"/>
</dbReference>
<dbReference type="GO" id="GO:0034353">
    <property type="term" value="F:mRNA 5'-diphosphatase activity"/>
    <property type="evidence" value="ECO:0007669"/>
    <property type="project" value="TreeGrafter"/>
</dbReference>
<dbReference type="GO" id="GO:0006402">
    <property type="term" value="P:mRNA catabolic process"/>
    <property type="evidence" value="ECO:0007669"/>
    <property type="project" value="TreeGrafter"/>
</dbReference>
<dbReference type="CDD" id="cd03671">
    <property type="entry name" value="NUDIX_Ap4A_hydrolase_plant_like"/>
    <property type="match status" value="1"/>
</dbReference>
<dbReference type="FunFam" id="3.90.79.10:FF:000001">
    <property type="entry name" value="RNA pyrophosphohydrolase"/>
    <property type="match status" value="1"/>
</dbReference>
<dbReference type="Gene3D" id="3.90.79.10">
    <property type="entry name" value="Nucleoside Triphosphate Pyrophosphohydrolase"/>
    <property type="match status" value="1"/>
</dbReference>
<dbReference type="HAMAP" id="MF_00298">
    <property type="entry name" value="Nudix_RppH"/>
    <property type="match status" value="1"/>
</dbReference>
<dbReference type="InterPro" id="IPR020476">
    <property type="entry name" value="Nudix_hydrolase"/>
</dbReference>
<dbReference type="InterPro" id="IPR015797">
    <property type="entry name" value="NUDIX_hydrolase-like_dom_sf"/>
</dbReference>
<dbReference type="InterPro" id="IPR020084">
    <property type="entry name" value="NUDIX_hydrolase_CS"/>
</dbReference>
<dbReference type="InterPro" id="IPR000086">
    <property type="entry name" value="NUDIX_hydrolase_dom"/>
</dbReference>
<dbReference type="InterPro" id="IPR022927">
    <property type="entry name" value="RppH"/>
</dbReference>
<dbReference type="NCBIfam" id="NF001934">
    <property type="entry name" value="PRK00714.1-1"/>
    <property type="match status" value="1"/>
</dbReference>
<dbReference type="NCBIfam" id="NF001937">
    <property type="entry name" value="PRK00714.1-4"/>
    <property type="match status" value="1"/>
</dbReference>
<dbReference type="NCBIfam" id="NF001938">
    <property type="entry name" value="PRK00714.1-5"/>
    <property type="match status" value="1"/>
</dbReference>
<dbReference type="PANTHER" id="PTHR23114">
    <property type="entry name" value="M7GPPPN-MRNA HYDROLASE"/>
    <property type="match status" value="1"/>
</dbReference>
<dbReference type="PANTHER" id="PTHR23114:SF17">
    <property type="entry name" value="M7GPPPN-MRNA HYDROLASE"/>
    <property type="match status" value="1"/>
</dbReference>
<dbReference type="Pfam" id="PF00293">
    <property type="entry name" value="NUDIX"/>
    <property type="match status" value="1"/>
</dbReference>
<dbReference type="PRINTS" id="PR00502">
    <property type="entry name" value="NUDIXFAMILY"/>
</dbReference>
<dbReference type="SUPFAM" id="SSF55811">
    <property type="entry name" value="Nudix"/>
    <property type="match status" value="1"/>
</dbReference>
<dbReference type="PROSITE" id="PS51462">
    <property type="entry name" value="NUDIX"/>
    <property type="match status" value="1"/>
</dbReference>
<dbReference type="PROSITE" id="PS00893">
    <property type="entry name" value="NUDIX_BOX"/>
    <property type="match status" value="1"/>
</dbReference>
<accession>C4LD21</accession>
<keyword id="KW-0378">Hydrolase</keyword>
<keyword id="KW-0479">Metal-binding</keyword>
<keyword id="KW-1185">Reference proteome</keyword>
<feature type="chain" id="PRO_1000204941" description="RNA pyrophosphohydrolase">
    <location>
        <begin position="1"/>
        <end position="174"/>
    </location>
</feature>
<feature type="domain" description="Nudix hydrolase" evidence="1">
    <location>
        <begin position="6"/>
        <end position="150"/>
    </location>
</feature>
<feature type="short sequence motif" description="Nudix box">
    <location>
        <begin position="38"/>
        <end position="59"/>
    </location>
</feature>
<evidence type="ECO:0000255" key="1">
    <source>
        <dbReference type="HAMAP-Rule" id="MF_00298"/>
    </source>
</evidence>
<sequence>MIDGDGFRPNVGIVICNRNGQVLWARRYGQHSWQFPQGGVDDGETPEQAMFRELYEEIGLKQDDVTILATSRNWLKYRLPKRLIRWESKPVCIGQKQKWFLLRLDAAKEACIQFGCHGQPEFDDWRWVSYWYPVRQVVSFKREVYRRVMKEFAAIAMPYLPPVAKKEPRRKGYR</sequence>
<protein>
    <recommendedName>
        <fullName evidence="1">RNA pyrophosphohydrolase</fullName>
        <ecNumber evidence="1">3.6.1.-</ecNumber>
    </recommendedName>
    <alternativeName>
        <fullName evidence="1">(Di)nucleoside polyphosphate hydrolase</fullName>
    </alternativeName>
</protein>
<organism>
    <name type="scientific">Tolumonas auensis (strain DSM 9187 / NBRC 110442 / TA 4)</name>
    <dbReference type="NCBI Taxonomy" id="595494"/>
    <lineage>
        <taxon>Bacteria</taxon>
        <taxon>Pseudomonadati</taxon>
        <taxon>Pseudomonadota</taxon>
        <taxon>Gammaproteobacteria</taxon>
        <taxon>Aeromonadales</taxon>
        <taxon>Aeromonadaceae</taxon>
        <taxon>Tolumonas</taxon>
    </lineage>
</organism>
<gene>
    <name evidence="1" type="primary">rppH</name>
    <name evidence="1" type="synonym">nudH</name>
    <name type="ordered locus">Tola_2963</name>
</gene>
<reference key="1">
    <citation type="submission" date="2009-05" db="EMBL/GenBank/DDBJ databases">
        <title>Complete sequence of Tolumonas auensis DSM 9187.</title>
        <authorList>
            <consortium name="US DOE Joint Genome Institute"/>
            <person name="Lucas S."/>
            <person name="Copeland A."/>
            <person name="Lapidus A."/>
            <person name="Glavina del Rio T."/>
            <person name="Tice H."/>
            <person name="Bruce D."/>
            <person name="Goodwin L."/>
            <person name="Pitluck S."/>
            <person name="Chertkov O."/>
            <person name="Brettin T."/>
            <person name="Detter J.C."/>
            <person name="Han C."/>
            <person name="Larimer F."/>
            <person name="Land M."/>
            <person name="Hauser L."/>
            <person name="Kyrpides N."/>
            <person name="Mikhailova N."/>
            <person name="Spring S."/>
            <person name="Beller H."/>
        </authorList>
    </citation>
    <scope>NUCLEOTIDE SEQUENCE [LARGE SCALE GENOMIC DNA]</scope>
    <source>
        <strain>DSM 9187 / NBRC 110442 / TA 4</strain>
    </source>
</reference>
<proteinExistence type="inferred from homology"/>